<keyword id="KW-0687">Ribonucleoprotein</keyword>
<keyword id="KW-0689">Ribosomal protein</keyword>
<evidence type="ECO:0000255" key="1">
    <source>
        <dbReference type="HAMAP-Rule" id="MF_00788"/>
    </source>
</evidence>
<evidence type="ECO:0000305" key="2"/>
<name>RL40_METS3</name>
<reference key="1">
    <citation type="journal article" date="2007" name="Proc. Natl. Acad. Sci. U.S.A.">
        <title>Genomic and metabolic adaptations of Methanobrevibacter smithii to the human gut.</title>
        <authorList>
            <person name="Samuel B.S."/>
            <person name="Hansen E.E."/>
            <person name="Manchester J.K."/>
            <person name="Coutinho P.M."/>
            <person name="Henrissat B."/>
            <person name="Fulton R."/>
            <person name="Latreille P."/>
            <person name="Kim K."/>
            <person name="Wilson R.K."/>
            <person name="Gordon J.I."/>
        </authorList>
    </citation>
    <scope>NUCLEOTIDE SEQUENCE [LARGE SCALE GENOMIC DNA]</scope>
    <source>
        <strain>ATCC 35061 / DSM 861 / OCM 144 / PS</strain>
    </source>
</reference>
<accession>A5UJF2</accession>
<proteinExistence type="inferred from homology"/>
<protein>
    <recommendedName>
        <fullName evidence="1">Large ribosomal subunit protein eL40</fullName>
    </recommendedName>
    <alternativeName>
        <fullName evidence="2">50S ribosomal protein L40e</fullName>
    </alternativeName>
</protein>
<gene>
    <name evidence="1" type="primary">rpl40e</name>
    <name type="ordered locus">Msm_0125</name>
</gene>
<dbReference type="EMBL" id="CP000678">
    <property type="protein sequence ID" value="ABQ86330.1"/>
    <property type="molecule type" value="Genomic_DNA"/>
</dbReference>
<dbReference type="RefSeq" id="WP_004034072.1">
    <property type="nucleotide sequence ID" value="NZ_CP117965.1"/>
</dbReference>
<dbReference type="SMR" id="A5UJF2"/>
<dbReference type="STRING" id="420247.Msm_0125"/>
<dbReference type="EnsemblBacteria" id="ABQ86330">
    <property type="protein sequence ID" value="ABQ86330"/>
    <property type="gene ID" value="Msm_0125"/>
</dbReference>
<dbReference type="KEGG" id="msi:Msm_0125"/>
<dbReference type="PATRIC" id="fig|420247.28.peg.129"/>
<dbReference type="eggNOG" id="arCOG04049">
    <property type="taxonomic scope" value="Archaea"/>
</dbReference>
<dbReference type="HOGENOM" id="CLU_205640_0_0_2"/>
<dbReference type="Proteomes" id="UP000001992">
    <property type="component" value="Chromosome"/>
</dbReference>
<dbReference type="GO" id="GO:1990904">
    <property type="term" value="C:ribonucleoprotein complex"/>
    <property type="evidence" value="ECO:0007669"/>
    <property type="project" value="UniProtKB-KW"/>
</dbReference>
<dbReference type="GO" id="GO:0005840">
    <property type="term" value="C:ribosome"/>
    <property type="evidence" value="ECO:0007669"/>
    <property type="project" value="UniProtKB-KW"/>
</dbReference>
<dbReference type="GO" id="GO:0003735">
    <property type="term" value="F:structural constituent of ribosome"/>
    <property type="evidence" value="ECO:0007669"/>
    <property type="project" value="InterPro"/>
</dbReference>
<dbReference type="GO" id="GO:0006412">
    <property type="term" value="P:translation"/>
    <property type="evidence" value="ECO:0007669"/>
    <property type="project" value="UniProtKB-UniRule"/>
</dbReference>
<dbReference type="Gene3D" id="4.10.1060.50">
    <property type="match status" value="1"/>
</dbReference>
<dbReference type="HAMAP" id="MF_00788">
    <property type="entry name" value="Ribosomal_eL40"/>
    <property type="match status" value="1"/>
</dbReference>
<dbReference type="InterPro" id="IPR023657">
    <property type="entry name" value="Ribosomal_eL40_arc"/>
</dbReference>
<dbReference type="InterPro" id="IPR001975">
    <property type="entry name" value="Ribosomal_eL40_dom"/>
</dbReference>
<dbReference type="InterPro" id="IPR038587">
    <property type="entry name" value="Ribosomal_eL40_sf"/>
</dbReference>
<dbReference type="InterPro" id="IPR011332">
    <property type="entry name" value="Ribosomal_zn-bd"/>
</dbReference>
<dbReference type="NCBIfam" id="NF003161">
    <property type="entry name" value="PRK04136.1"/>
    <property type="match status" value="1"/>
</dbReference>
<dbReference type="PANTHER" id="PTHR39649">
    <property type="entry name" value="50S RIBOSOMAL PROTEIN L40E"/>
    <property type="match status" value="1"/>
</dbReference>
<dbReference type="PANTHER" id="PTHR39649:SF1">
    <property type="entry name" value="LARGE RIBOSOMAL SUBUNIT PROTEIN EL40"/>
    <property type="match status" value="1"/>
</dbReference>
<dbReference type="Pfam" id="PF01020">
    <property type="entry name" value="Ribosomal_L40e"/>
    <property type="match status" value="1"/>
</dbReference>
<dbReference type="SMART" id="SM01377">
    <property type="entry name" value="Ribosomal_L40e"/>
    <property type="match status" value="1"/>
</dbReference>
<dbReference type="SUPFAM" id="SSF57829">
    <property type="entry name" value="Zn-binding ribosomal proteins"/>
    <property type="match status" value="1"/>
</dbReference>
<comment type="similarity">
    <text evidence="1">Belongs to the eukaryotic ribosomal protein eL40 family.</text>
</comment>
<feature type="chain" id="PRO_1000046887" description="Large ribosomal subunit protein eL40">
    <location>
        <begin position="1"/>
        <end position="48"/>
    </location>
</feature>
<organism>
    <name type="scientific">Methanobrevibacter smithii (strain ATCC 35061 / DSM 861 / OCM 144 / PS)</name>
    <dbReference type="NCBI Taxonomy" id="420247"/>
    <lineage>
        <taxon>Archaea</taxon>
        <taxon>Methanobacteriati</taxon>
        <taxon>Methanobacteriota</taxon>
        <taxon>Methanomada group</taxon>
        <taxon>Methanobacteria</taxon>
        <taxon>Methanobacteriales</taxon>
        <taxon>Methanobacteriaceae</taxon>
        <taxon>Methanobrevibacter</taxon>
    </lineage>
</organism>
<sequence>MARFEEAENRMFNVKICLKCNARNPAAATTCRKCGYTGLRFKAKEPRG</sequence>